<proteinExistence type="evidence at transcript level"/>
<gene>
    <name type="primary">gefM</name>
    <name type="synonym">rasGEFM</name>
    <name type="ORF">DDB_G0274607</name>
</gene>
<feature type="chain" id="PRO_0000384471" description="Ras guanine nucleotide exchange factor M">
    <location>
        <begin position="1"/>
        <end position="929"/>
    </location>
</feature>
<feature type="domain" description="N-terminal Ras-GEF" evidence="2">
    <location>
        <begin position="390"/>
        <end position="528"/>
    </location>
</feature>
<feature type="domain" description="Ras-GEF" evidence="3">
    <location>
        <begin position="676"/>
        <end position="911"/>
    </location>
</feature>
<feature type="region of interest" description="Disordered" evidence="4">
    <location>
        <begin position="1"/>
        <end position="102"/>
    </location>
</feature>
<feature type="region of interest" description="Disordered" evidence="4">
    <location>
        <begin position="169"/>
        <end position="316"/>
    </location>
</feature>
<feature type="region of interest" description="Disordered" evidence="4">
    <location>
        <begin position="540"/>
        <end position="583"/>
    </location>
</feature>
<feature type="compositionally biased region" description="Polar residues" evidence="4">
    <location>
        <begin position="1"/>
        <end position="15"/>
    </location>
</feature>
<feature type="compositionally biased region" description="Low complexity" evidence="4">
    <location>
        <begin position="16"/>
        <end position="33"/>
    </location>
</feature>
<feature type="compositionally biased region" description="Gly residues" evidence="4">
    <location>
        <begin position="44"/>
        <end position="67"/>
    </location>
</feature>
<feature type="compositionally biased region" description="Low complexity" evidence="4">
    <location>
        <begin position="68"/>
        <end position="80"/>
    </location>
</feature>
<feature type="compositionally biased region" description="Low complexity" evidence="4">
    <location>
        <begin position="169"/>
        <end position="191"/>
    </location>
</feature>
<feature type="compositionally biased region" description="Gly residues" evidence="4">
    <location>
        <begin position="192"/>
        <end position="202"/>
    </location>
</feature>
<feature type="compositionally biased region" description="Low complexity" evidence="4">
    <location>
        <begin position="203"/>
        <end position="246"/>
    </location>
</feature>
<feature type="compositionally biased region" description="Polar residues" evidence="4">
    <location>
        <begin position="247"/>
        <end position="256"/>
    </location>
</feature>
<feature type="compositionally biased region" description="Low complexity" evidence="4">
    <location>
        <begin position="270"/>
        <end position="287"/>
    </location>
</feature>
<feature type="compositionally biased region" description="Polar residues" evidence="4">
    <location>
        <begin position="295"/>
        <end position="305"/>
    </location>
</feature>
<accession>Q8SSQ3</accession>
<accession>Q555T3</accession>
<comment type="function">
    <text evidence="1">Promotes the exchange of Ras-bound GDP by GTP.</text>
</comment>
<comment type="developmental stage">
    <text evidence="5">Expressed during development with a peak between 12 and 14 hours of development.</text>
</comment>
<comment type="induction">
    <text evidence="6 7">Up-regulated by Pseudomonas aeruginosa, PAO1 strain and PA14 strain infection and down-regulated by phagocytic stimuli.</text>
</comment>
<evidence type="ECO:0000250" key="1"/>
<evidence type="ECO:0000255" key="2">
    <source>
        <dbReference type="PROSITE-ProRule" id="PRU00135"/>
    </source>
</evidence>
<evidence type="ECO:0000255" key="3">
    <source>
        <dbReference type="PROSITE-ProRule" id="PRU00168"/>
    </source>
</evidence>
<evidence type="ECO:0000256" key="4">
    <source>
        <dbReference type="SAM" id="MobiDB-lite"/>
    </source>
</evidence>
<evidence type="ECO:0000269" key="5">
    <source>
    </source>
</evidence>
<evidence type="ECO:0000269" key="6">
    <source>
    </source>
</evidence>
<evidence type="ECO:0000269" key="7">
    <source>
    </source>
</evidence>
<dbReference type="EMBL" id="AY160102">
    <property type="protein sequence ID" value="AAN46882.1"/>
    <property type="molecule type" value="Genomic_DNA"/>
</dbReference>
<dbReference type="EMBL" id="AAFI02000012">
    <property type="protein sequence ID" value="EAL70196.1"/>
    <property type="molecule type" value="Genomic_DNA"/>
</dbReference>
<dbReference type="RefSeq" id="XP_643977.1">
    <property type="nucleotide sequence ID" value="XM_638885.1"/>
</dbReference>
<dbReference type="SMR" id="Q8SSQ3"/>
<dbReference type="FunCoup" id="Q8SSQ3">
    <property type="interactions" value="39"/>
</dbReference>
<dbReference type="STRING" id="44689.Q8SSQ3"/>
<dbReference type="GlyGen" id="Q8SSQ3">
    <property type="glycosylation" value="1 site"/>
</dbReference>
<dbReference type="PaxDb" id="44689-DDB0191326"/>
<dbReference type="EnsemblProtists" id="EAL70196">
    <property type="protein sequence ID" value="EAL70196"/>
    <property type="gene ID" value="DDB_G0274607"/>
</dbReference>
<dbReference type="GeneID" id="8619403"/>
<dbReference type="KEGG" id="ddi:DDB_G0274607"/>
<dbReference type="dictyBase" id="DDB_G0274607">
    <property type="gene designation" value="gefM"/>
</dbReference>
<dbReference type="VEuPathDB" id="AmoebaDB:DDB_G0274607"/>
<dbReference type="eggNOG" id="KOG3417">
    <property type="taxonomic scope" value="Eukaryota"/>
</dbReference>
<dbReference type="HOGENOM" id="CLU_314849_0_0_1"/>
<dbReference type="InParanoid" id="Q8SSQ3"/>
<dbReference type="OMA" id="LQDINFI"/>
<dbReference type="Reactome" id="R-DDI-193648">
    <property type="pathway name" value="NRAGE signals death through JNK"/>
</dbReference>
<dbReference type="Reactome" id="R-DDI-9013148">
    <property type="pathway name" value="CDC42 GTPase cycle"/>
</dbReference>
<dbReference type="Reactome" id="R-DDI-9013149">
    <property type="pathway name" value="RAC1 GTPase cycle"/>
</dbReference>
<dbReference type="PRO" id="PR:Q8SSQ3"/>
<dbReference type="Proteomes" id="UP000002195">
    <property type="component" value="Chromosome 2"/>
</dbReference>
<dbReference type="GO" id="GO:0005829">
    <property type="term" value="C:cytosol"/>
    <property type="evidence" value="ECO:0000314"/>
    <property type="project" value="dictyBase"/>
</dbReference>
<dbReference type="GO" id="GO:0005886">
    <property type="term" value="C:plasma membrane"/>
    <property type="evidence" value="ECO:0000318"/>
    <property type="project" value="GO_Central"/>
</dbReference>
<dbReference type="GO" id="GO:0005085">
    <property type="term" value="F:guanyl-nucleotide exchange factor activity"/>
    <property type="evidence" value="ECO:0000318"/>
    <property type="project" value="GO_Central"/>
</dbReference>
<dbReference type="GO" id="GO:0043327">
    <property type="term" value="P:chemotaxis to cAMP"/>
    <property type="evidence" value="ECO:0000315"/>
    <property type="project" value="dictyBase"/>
</dbReference>
<dbReference type="GO" id="GO:0050850">
    <property type="term" value="P:positive regulation of calcium-mediated signaling"/>
    <property type="evidence" value="ECO:0000315"/>
    <property type="project" value="dictyBase"/>
</dbReference>
<dbReference type="GO" id="GO:0007265">
    <property type="term" value="P:Ras protein signal transduction"/>
    <property type="evidence" value="ECO:0000318"/>
    <property type="project" value="GO_Central"/>
</dbReference>
<dbReference type="GO" id="GO:0106070">
    <property type="term" value="P:regulation of adenylate cyclase-activating G protein-coupled receptor signaling pathway"/>
    <property type="evidence" value="ECO:0000315"/>
    <property type="project" value="dictyBase"/>
</dbReference>
<dbReference type="GO" id="GO:2000145">
    <property type="term" value="P:regulation of cell motility"/>
    <property type="evidence" value="ECO:0000316"/>
    <property type="project" value="dictyBase"/>
</dbReference>
<dbReference type="CDD" id="cd00155">
    <property type="entry name" value="RasGEF"/>
    <property type="match status" value="1"/>
</dbReference>
<dbReference type="CDD" id="cd06224">
    <property type="entry name" value="REM"/>
    <property type="match status" value="1"/>
</dbReference>
<dbReference type="Gene3D" id="1.10.840.10">
    <property type="entry name" value="Ras guanine-nucleotide exchange factors catalytic domain"/>
    <property type="match status" value="1"/>
</dbReference>
<dbReference type="Gene3D" id="1.20.870.10">
    <property type="entry name" value="Son of sevenless (SoS) protein Chain: S domain 1"/>
    <property type="match status" value="1"/>
</dbReference>
<dbReference type="InterPro" id="IPR008937">
    <property type="entry name" value="Ras-like_GEF"/>
</dbReference>
<dbReference type="InterPro" id="IPR000651">
    <property type="entry name" value="Ras-like_Gua-exchang_fac_N"/>
</dbReference>
<dbReference type="InterPro" id="IPR023578">
    <property type="entry name" value="Ras_GEF_dom_sf"/>
</dbReference>
<dbReference type="InterPro" id="IPR001895">
    <property type="entry name" value="RASGEF_cat_dom"/>
</dbReference>
<dbReference type="InterPro" id="IPR036964">
    <property type="entry name" value="RASGEF_cat_dom_sf"/>
</dbReference>
<dbReference type="PANTHER" id="PTHR23113">
    <property type="entry name" value="GUANINE NUCLEOTIDE EXCHANGE FACTOR"/>
    <property type="match status" value="1"/>
</dbReference>
<dbReference type="PANTHER" id="PTHR23113:SF241">
    <property type="entry name" value="RAS GUANINE NUCLEOTIDE EXCHANGE FACTOR M"/>
    <property type="match status" value="1"/>
</dbReference>
<dbReference type="Pfam" id="PF00617">
    <property type="entry name" value="RasGEF"/>
    <property type="match status" value="1"/>
</dbReference>
<dbReference type="Pfam" id="PF00618">
    <property type="entry name" value="RasGEF_N"/>
    <property type="match status" value="1"/>
</dbReference>
<dbReference type="SMART" id="SM00147">
    <property type="entry name" value="RasGEF"/>
    <property type="match status" value="1"/>
</dbReference>
<dbReference type="SMART" id="SM00229">
    <property type="entry name" value="RasGEFN"/>
    <property type="match status" value="1"/>
</dbReference>
<dbReference type="SUPFAM" id="SSF48366">
    <property type="entry name" value="Ras GEF"/>
    <property type="match status" value="1"/>
</dbReference>
<dbReference type="PROSITE" id="PS50009">
    <property type="entry name" value="RASGEF_CAT"/>
    <property type="match status" value="1"/>
</dbReference>
<dbReference type="PROSITE" id="PS50212">
    <property type="entry name" value="RASGEF_NTER"/>
    <property type="match status" value="1"/>
</dbReference>
<sequence>MWQKPSLTKSMMNEVSSNSPKSPTLTSSPSTQSFANRVLPGRNLDGGGGGSNRLIFGGSGGGSGGGSLPSSPVSSPVNPFNLNGGGGGKSSRRRGVTVAAGSEQVETRRKILLGNSRPFRRRARSMEILNSWDFIPYQKKPSDDEQGQVDQYIQGENDEDLTSYESYITNNNTTTTTNTNNSNNNNSNNDGSGSGSGAGGSFIGTTTSAKTTSTTSTSAATTTTTTTTSSSSSSPSSSSPSSTSPTIASNNDNNNKIEPPQPSKIANSVPPLTLSQSQTQQQQQQKVKPPPPSPRFSTNSSGSQSPPVPPRSSKSLGLSNDFSISLSSSMSSNSLLISGSINTLPTSSSSSSSVGGSGASAASASISSSSSLSSSSLSVSKLIYENNEENKFVVVSGPKDQLVEYLCNKNKLDFSFVNSFILSFRYFIEPEELFNHLMVKYETKVQTTSSIKVSKQFEEIQDRIRQNILIIISVWVDCNYSDFEDNLSLHKRLFKLVQDTPHAVFLRDSIDRQKVSKIPILDLYEKLKDELLLSLSPRGSLSGSGGISNNNNGSDLKNSNNGNNSSNNNNSSSNSSSSSSSSDIKNIKNSFFSLTTMMDWLMNHLSIGYATADSILKKLFKLKVIGSLGSGGGFTNISSSHTNSNSKSSKEELYFFTSTKSIINKEIYSRSFMDYSPQDIAKQLTLIEFKLFQSVKMKELYHKSWTISKSKFENSPNIMSLITMSNKIANWVATEVVTTPHPKKRVEVLKRFISVAEHCKKINNFNTLMEVISGLSNSAVSRLKETWKSLPTRYVNSFNSLQNFLKTDENWKSYRQTLKTKETPCLPYLGLFLQDINFIEDGNSNLSSENDWVNFKKMNLLTSVFTEIQYFQRHPYFSFSTHQNIQTYFEKDIVILPEKELYAFSKFIESPSNPLFRLSKSKNQSIFNI</sequence>
<organism>
    <name type="scientific">Dictyostelium discoideum</name>
    <name type="common">Social amoeba</name>
    <dbReference type="NCBI Taxonomy" id="44689"/>
    <lineage>
        <taxon>Eukaryota</taxon>
        <taxon>Amoebozoa</taxon>
        <taxon>Evosea</taxon>
        <taxon>Eumycetozoa</taxon>
        <taxon>Dictyostelia</taxon>
        <taxon>Dictyosteliales</taxon>
        <taxon>Dictyosteliaceae</taxon>
        <taxon>Dictyostelium</taxon>
    </lineage>
</organism>
<keyword id="KW-0344">Guanine-nucleotide releasing factor</keyword>
<keyword id="KW-1185">Reference proteome</keyword>
<protein>
    <recommendedName>
        <fullName>Ras guanine nucleotide exchange factor M</fullName>
    </recommendedName>
    <alternativeName>
        <fullName>RasGEF domain-containing protein M</fullName>
    </alternativeName>
</protein>
<name>GEFM_DICDI</name>
<reference key="1">
    <citation type="journal article" date="2005" name="Genome Biol.">
        <title>The Dictyostelium genome encodes numerous RasGEFs with multiple biological roles.</title>
        <authorList>
            <person name="Wilkins A."/>
            <person name="Szafranski K."/>
            <person name="Fraser D.J."/>
            <person name="Bakthavatsalam D."/>
            <person name="Mueller R."/>
            <person name="Fisher P.R."/>
            <person name="Gloeckner G."/>
            <person name="Eichinger L."/>
            <person name="Noegel A.A."/>
            <person name="Insall R.H."/>
        </authorList>
    </citation>
    <scope>NUCLEOTIDE SEQUENCE [GENOMIC DNA]</scope>
    <scope>DEVELOPMENTAL STAGE</scope>
    <source>
        <strain>AX4</strain>
    </source>
</reference>
<reference key="2">
    <citation type="journal article" date="2002" name="Nature">
        <title>Sequence and analysis of chromosome 2 of Dictyostelium discoideum.</title>
        <authorList>
            <person name="Gloeckner G."/>
            <person name="Eichinger L."/>
            <person name="Szafranski K."/>
            <person name="Pachebat J.A."/>
            <person name="Bankier A.T."/>
            <person name="Dear P.H."/>
            <person name="Lehmann R."/>
            <person name="Baumgart C."/>
            <person name="Parra G."/>
            <person name="Abril J.F."/>
            <person name="Guigo R."/>
            <person name="Kumpf K."/>
            <person name="Tunggal B."/>
            <person name="Cox E.C."/>
            <person name="Quail M.A."/>
            <person name="Platzer M."/>
            <person name="Rosenthal A."/>
            <person name="Noegel A.A."/>
        </authorList>
    </citation>
    <scope>NUCLEOTIDE SEQUENCE [LARGE SCALE GENOMIC DNA]</scope>
    <source>
        <strain>AX4</strain>
    </source>
</reference>
<reference key="3">
    <citation type="journal article" date="2005" name="Nature">
        <title>The genome of the social amoeba Dictyostelium discoideum.</title>
        <authorList>
            <person name="Eichinger L."/>
            <person name="Pachebat J.A."/>
            <person name="Gloeckner G."/>
            <person name="Rajandream M.A."/>
            <person name="Sucgang R."/>
            <person name="Berriman M."/>
            <person name="Song J."/>
            <person name="Olsen R."/>
            <person name="Szafranski K."/>
            <person name="Xu Q."/>
            <person name="Tunggal B."/>
            <person name="Kummerfeld S."/>
            <person name="Madera M."/>
            <person name="Konfortov B.A."/>
            <person name="Rivero F."/>
            <person name="Bankier A.T."/>
            <person name="Lehmann R."/>
            <person name="Hamlin N."/>
            <person name="Davies R."/>
            <person name="Gaudet P."/>
            <person name="Fey P."/>
            <person name="Pilcher K."/>
            <person name="Chen G."/>
            <person name="Saunders D."/>
            <person name="Sodergren E.J."/>
            <person name="Davis P."/>
            <person name="Kerhornou A."/>
            <person name="Nie X."/>
            <person name="Hall N."/>
            <person name="Anjard C."/>
            <person name="Hemphill L."/>
            <person name="Bason N."/>
            <person name="Farbrother P."/>
            <person name="Desany B."/>
            <person name="Just E."/>
            <person name="Morio T."/>
            <person name="Rost R."/>
            <person name="Churcher C.M."/>
            <person name="Cooper J."/>
            <person name="Haydock S."/>
            <person name="van Driessche N."/>
            <person name="Cronin A."/>
            <person name="Goodhead I."/>
            <person name="Muzny D.M."/>
            <person name="Mourier T."/>
            <person name="Pain A."/>
            <person name="Lu M."/>
            <person name="Harper D."/>
            <person name="Lindsay R."/>
            <person name="Hauser H."/>
            <person name="James K.D."/>
            <person name="Quiles M."/>
            <person name="Madan Babu M."/>
            <person name="Saito T."/>
            <person name="Buchrieser C."/>
            <person name="Wardroper A."/>
            <person name="Felder M."/>
            <person name="Thangavelu M."/>
            <person name="Johnson D."/>
            <person name="Knights A."/>
            <person name="Loulseged H."/>
            <person name="Mungall K.L."/>
            <person name="Oliver K."/>
            <person name="Price C."/>
            <person name="Quail M.A."/>
            <person name="Urushihara H."/>
            <person name="Hernandez J."/>
            <person name="Rabbinowitsch E."/>
            <person name="Steffen D."/>
            <person name="Sanders M."/>
            <person name="Ma J."/>
            <person name="Kohara Y."/>
            <person name="Sharp S."/>
            <person name="Simmonds M.N."/>
            <person name="Spiegler S."/>
            <person name="Tivey A."/>
            <person name="Sugano S."/>
            <person name="White B."/>
            <person name="Walker D."/>
            <person name="Woodward J.R."/>
            <person name="Winckler T."/>
            <person name="Tanaka Y."/>
            <person name="Shaulsky G."/>
            <person name="Schleicher M."/>
            <person name="Weinstock G.M."/>
            <person name="Rosenthal A."/>
            <person name="Cox E.C."/>
            <person name="Chisholm R.L."/>
            <person name="Gibbs R.A."/>
            <person name="Loomis W.F."/>
            <person name="Platzer M."/>
            <person name="Kay R.R."/>
            <person name="Williams J.G."/>
            <person name="Dear P.H."/>
            <person name="Noegel A.A."/>
            <person name="Barrell B.G."/>
            <person name="Kuspa A."/>
        </authorList>
    </citation>
    <scope>NUCLEOTIDE SEQUENCE [LARGE SCALE GENOMIC DNA]</scope>
    <source>
        <strain>AX4</strain>
    </source>
</reference>
<reference key="4">
    <citation type="journal article" date="2008" name="BMC Microbiol.">
        <title>Dictyostelium transcriptional responses to Pseudomonas aeruginosa: common and specific effects from PAO1 and PA14 strains.</title>
        <authorList>
            <person name="Carilla-Latorre S."/>
            <person name="Calvo-Garrido J."/>
            <person name="Bloomfield G."/>
            <person name="Skelton J."/>
            <person name="Kay R.R."/>
            <person name="Ivens A."/>
            <person name="Martinez J.L."/>
            <person name="Escalante R."/>
        </authorList>
    </citation>
    <scope>INDUCTION [LARGE SCALE ANALYSIS]</scope>
</reference>
<reference key="5">
    <citation type="journal article" date="2008" name="BMC Genomics">
        <title>Genome-wide transcriptional changes induced by phagocytosis or growth on bacteria in Dictyostelium.</title>
        <authorList>
            <person name="Sillo A."/>
            <person name="Bloomfield G."/>
            <person name="Balest A."/>
            <person name="Balbo A."/>
            <person name="Pergolizzi B."/>
            <person name="Peracino B."/>
            <person name="Skelton J."/>
            <person name="Ivens A."/>
            <person name="Bozzaro S."/>
        </authorList>
    </citation>
    <scope>INDUCTION [LARGE SCALE ANALYSIS]</scope>
</reference>